<dbReference type="EC" id="2.7.1.33" evidence="1"/>
<dbReference type="EMBL" id="CP001177">
    <property type="protein sequence ID" value="ACJ78886.1"/>
    <property type="molecule type" value="Genomic_DNA"/>
</dbReference>
<dbReference type="SMR" id="B7HPX7"/>
<dbReference type="KEGG" id="bcr:BCAH187_A0077"/>
<dbReference type="HOGENOM" id="CLU_066627_1_0_9"/>
<dbReference type="UniPathway" id="UPA00241">
    <property type="reaction ID" value="UER00352"/>
</dbReference>
<dbReference type="Proteomes" id="UP000002214">
    <property type="component" value="Chromosome"/>
</dbReference>
<dbReference type="GO" id="GO:0005737">
    <property type="term" value="C:cytoplasm"/>
    <property type="evidence" value="ECO:0007669"/>
    <property type="project" value="UniProtKB-SubCell"/>
</dbReference>
<dbReference type="GO" id="GO:0005524">
    <property type="term" value="F:ATP binding"/>
    <property type="evidence" value="ECO:0007669"/>
    <property type="project" value="UniProtKB-UniRule"/>
</dbReference>
<dbReference type="GO" id="GO:0046872">
    <property type="term" value="F:metal ion binding"/>
    <property type="evidence" value="ECO:0007669"/>
    <property type="project" value="UniProtKB-KW"/>
</dbReference>
<dbReference type="GO" id="GO:0004594">
    <property type="term" value="F:pantothenate kinase activity"/>
    <property type="evidence" value="ECO:0007669"/>
    <property type="project" value="UniProtKB-UniRule"/>
</dbReference>
<dbReference type="GO" id="GO:0015937">
    <property type="term" value="P:coenzyme A biosynthetic process"/>
    <property type="evidence" value="ECO:0007669"/>
    <property type="project" value="UniProtKB-UniRule"/>
</dbReference>
<dbReference type="CDD" id="cd24015">
    <property type="entry name" value="ASKHA_NBD_PanK-III"/>
    <property type="match status" value="1"/>
</dbReference>
<dbReference type="Gene3D" id="3.30.420.40">
    <property type="match status" value="2"/>
</dbReference>
<dbReference type="HAMAP" id="MF_01274">
    <property type="entry name" value="Pantothen_kinase_3"/>
    <property type="match status" value="1"/>
</dbReference>
<dbReference type="InterPro" id="IPR043129">
    <property type="entry name" value="ATPase_NBD"/>
</dbReference>
<dbReference type="InterPro" id="IPR004619">
    <property type="entry name" value="Type_III_PanK"/>
</dbReference>
<dbReference type="NCBIfam" id="TIGR00671">
    <property type="entry name" value="baf"/>
    <property type="match status" value="1"/>
</dbReference>
<dbReference type="NCBIfam" id="NF009843">
    <property type="entry name" value="PRK13318.1-1"/>
    <property type="match status" value="1"/>
</dbReference>
<dbReference type="NCBIfam" id="NF009847">
    <property type="entry name" value="PRK13318.1-5"/>
    <property type="match status" value="1"/>
</dbReference>
<dbReference type="NCBIfam" id="NF009848">
    <property type="entry name" value="PRK13318.1-6"/>
    <property type="match status" value="1"/>
</dbReference>
<dbReference type="NCBIfam" id="NF009855">
    <property type="entry name" value="PRK13321.1"/>
    <property type="match status" value="1"/>
</dbReference>
<dbReference type="PANTHER" id="PTHR34265">
    <property type="entry name" value="TYPE III PANTOTHENATE KINASE"/>
    <property type="match status" value="1"/>
</dbReference>
<dbReference type="PANTHER" id="PTHR34265:SF1">
    <property type="entry name" value="TYPE III PANTOTHENATE KINASE"/>
    <property type="match status" value="1"/>
</dbReference>
<dbReference type="Pfam" id="PF03309">
    <property type="entry name" value="Pan_kinase"/>
    <property type="match status" value="1"/>
</dbReference>
<dbReference type="SUPFAM" id="SSF53067">
    <property type="entry name" value="Actin-like ATPase domain"/>
    <property type="match status" value="2"/>
</dbReference>
<proteinExistence type="inferred from homology"/>
<keyword id="KW-0067">ATP-binding</keyword>
<keyword id="KW-0173">Coenzyme A biosynthesis</keyword>
<keyword id="KW-0963">Cytoplasm</keyword>
<keyword id="KW-0418">Kinase</keyword>
<keyword id="KW-0479">Metal-binding</keyword>
<keyword id="KW-0547">Nucleotide-binding</keyword>
<keyword id="KW-0630">Potassium</keyword>
<keyword id="KW-0808">Transferase</keyword>
<organism>
    <name type="scientific">Bacillus cereus (strain AH187)</name>
    <dbReference type="NCBI Taxonomy" id="405534"/>
    <lineage>
        <taxon>Bacteria</taxon>
        <taxon>Bacillati</taxon>
        <taxon>Bacillota</taxon>
        <taxon>Bacilli</taxon>
        <taxon>Bacillales</taxon>
        <taxon>Bacillaceae</taxon>
        <taxon>Bacillus</taxon>
        <taxon>Bacillus cereus group</taxon>
    </lineage>
</organism>
<evidence type="ECO:0000255" key="1">
    <source>
        <dbReference type="HAMAP-Rule" id="MF_01274"/>
    </source>
</evidence>
<protein>
    <recommendedName>
        <fullName evidence="1">Type III pantothenate kinase</fullName>
        <ecNumber evidence="1">2.7.1.33</ecNumber>
    </recommendedName>
    <alternativeName>
        <fullName evidence="1">PanK-III</fullName>
    </alternativeName>
    <alternativeName>
        <fullName evidence="1">Pantothenic acid kinase</fullName>
    </alternativeName>
</protein>
<accession>B7HPX7</accession>
<name>COAX_BACC7</name>
<sequence>MIFVLDVGNTNAVLGVFEEGELRQHWRMETDRHKTEDEYGMLVKQLLEHEGLSFEDVKGIIVSSVVPPIMFALERMCEKYFKIKPLVVGPGIKTGLNIKYENPREVGADRIVNAVAGIHLYGSPLIIVDFGTATTYCYINEEKHYMGGVITPGIMISAEALYSRAAKLPRIEITKPSSVVGKNTVSAMQSGILYGYVGQVEGIVKRMKEEAKQEPKVIATGGLAKLISEESNVIDVVDPFLTLKGLYMLYERNANLQHEKGE</sequence>
<feature type="chain" id="PRO_1000140221" description="Type III pantothenate kinase">
    <location>
        <begin position="1"/>
        <end position="262"/>
    </location>
</feature>
<feature type="active site" description="Proton acceptor" evidence="1">
    <location>
        <position position="109"/>
    </location>
</feature>
<feature type="binding site" evidence="1">
    <location>
        <begin position="6"/>
        <end position="13"/>
    </location>
    <ligand>
        <name>ATP</name>
        <dbReference type="ChEBI" id="CHEBI:30616"/>
    </ligand>
</feature>
<feature type="binding site" evidence="1">
    <location>
        <position position="100"/>
    </location>
    <ligand>
        <name>substrate</name>
    </ligand>
</feature>
<feature type="binding site" evidence="1">
    <location>
        <begin position="107"/>
        <end position="110"/>
    </location>
    <ligand>
        <name>substrate</name>
    </ligand>
</feature>
<feature type="binding site" evidence="1">
    <location>
        <position position="129"/>
    </location>
    <ligand>
        <name>K(+)</name>
        <dbReference type="ChEBI" id="CHEBI:29103"/>
    </ligand>
</feature>
<feature type="binding site" evidence="1">
    <location>
        <position position="132"/>
    </location>
    <ligand>
        <name>ATP</name>
        <dbReference type="ChEBI" id="CHEBI:30616"/>
    </ligand>
</feature>
<feature type="binding site" evidence="1">
    <location>
        <position position="184"/>
    </location>
    <ligand>
        <name>substrate</name>
    </ligand>
</feature>
<comment type="function">
    <text evidence="1">Catalyzes the phosphorylation of pantothenate (Pan), the first step in CoA biosynthesis.</text>
</comment>
<comment type="catalytic activity">
    <reaction evidence="1">
        <text>(R)-pantothenate + ATP = (R)-4'-phosphopantothenate + ADP + H(+)</text>
        <dbReference type="Rhea" id="RHEA:16373"/>
        <dbReference type="ChEBI" id="CHEBI:10986"/>
        <dbReference type="ChEBI" id="CHEBI:15378"/>
        <dbReference type="ChEBI" id="CHEBI:29032"/>
        <dbReference type="ChEBI" id="CHEBI:30616"/>
        <dbReference type="ChEBI" id="CHEBI:456216"/>
        <dbReference type="EC" id="2.7.1.33"/>
    </reaction>
</comment>
<comment type="cofactor">
    <cofactor evidence="1">
        <name>NH4(+)</name>
        <dbReference type="ChEBI" id="CHEBI:28938"/>
    </cofactor>
    <cofactor evidence="1">
        <name>K(+)</name>
        <dbReference type="ChEBI" id="CHEBI:29103"/>
    </cofactor>
    <text evidence="1">A monovalent cation. Ammonium or potassium.</text>
</comment>
<comment type="pathway">
    <text evidence="1">Cofactor biosynthesis; coenzyme A biosynthesis; CoA from (R)-pantothenate: step 1/5.</text>
</comment>
<comment type="subunit">
    <text evidence="1">Homodimer.</text>
</comment>
<comment type="subcellular location">
    <subcellularLocation>
        <location evidence="1">Cytoplasm</location>
    </subcellularLocation>
</comment>
<comment type="similarity">
    <text evidence="1">Belongs to the type III pantothenate kinase family.</text>
</comment>
<gene>
    <name evidence="1" type="primary">coaX</name>
    <name type="ordered locus">BCAH187_A0077</name>
</gene>
<reference key="1">
    <citation type="submission" date="2008-10" db="EMBL/GenBank/DDBJ databases">
        <title>Genome sequence of Bacillus cereus AH187.</title>
        <authorList>
            <person name="Dodson R.J."/>
            <person name="Durkin A.S."/>
            <person name="Rosovitz M.J."/>
            <person name="Rasko D.A."/>
            <person name="Kolsto A.B."/>
            <person name="Okstad O.A."/>
            <person name="Ravel J."/>
            <person name="Sutton G."/>
        </authorList>
    </citation>
    <scope>NUCLEOTIDE SEQUENCE [LARGE SCALE GENOMIC DNA]</scope>
    <source>
        <strain>AH187</strain>
    </source>
</reference>